<feature type="chain" id="PRO_0000227448" description="UvrABC system protein C">
    <location>
        <begin position="1"/>
        <end position="589"/>
    </location>
</feature>
<feature type="domain" description="GIY-YIG" evidence="1">
    <location>
        <begin position="14"/>
        <end position="91"/>
    </location>
</feature>
<gene>
    <name evidence="1" type="primary">uvrC</name>
    <name type="ordered locus">MYPE1260</name>
</gene>
<proteinExistence type="inferred from homology"/>
<sequence>MNEQIKDKLKKIPHKPGCYLWKDKNGIVIYVGKAVDLANRIKQYFLKDRDLKTKKLANEICDVDYVVVNNENESLLLENNLIAKYKPKYNMLLRESNAFPYILVTKEEHPRILYSHDSTKKIKGTYYGPFANSNIKKYELYNFINRIFPLRKCNKLPNKKCIYYDIGQCLGPCIKKVTRQDYEPYLKEINDFFSGKSKSIDEQLEKKEIQAAEKLMFEDSQKYLELRKNLKMFSERQDIIFSQKNDEDIIGFYCKENVISIVIFKYVNGSLLSKYDLITVFYSELDEILLTLIYEYYSKIAIELPKTVYLSLSDEKLKTLSESLKIKFLNPSKGVKKDVMDTAFNNAVEIMKNKYLQLISNQNRELNSLEELQKLLDIKDLYRMEIFDNSNIFNTNKVGAMVVYENGVKNKNEYRKFNIKDEDANSDYDYMKEVIYRRYKNNTASFGEIPNLIIVDGGKPQVKAALESLKFLELDSIIPVIGLAKDDKHKTDRIVKWDFSEIKLDKKSDLYFFLLNIQDEVHRFAISFYRNKKSKSLFENSLYKIKNLGKTRIEKLLEKYETLDKIKEASVEELSQIVPIEVAKEIKKL</sequence>
<keyword id="KW-0963">Cytoplasm</keyword>
<keyword id="KW-0227">DNA damage</keyword>
<keyword id="KW-0228">DNA excision</keyword>
<keyword id="KW-0234">DNA repair</keyword>
<keyword id="KW-0267">Excision nuclease</keyword>
<keyword id="KW-1185">Reference proteome</keyword>
<keyword id="KW-0742">SOS response</keyword>
<name>UVRC_MALP2</name>
<evidence type="ECO:0000255" key="1">
    <source>
        <dbReference type="HAMAP-Rule" id="MF_00203"/>
    </source>
</evidence>
<dbReference type="EMBL" id="BA000026">
    <property type="protein sequence ID" value="BAC43918.1"/>
    <property type="molecule type" value="Genomic_DNA"/>
</dbReference>
<dbReference type="RefSeq" id="WP_011076954.1">
    <property type="nucleotide sequence ID" value="NC_004432.1"/>
</dbReference>
<dbReference type="SMR" id="Q8EWS6"/>
<dbReference type="FunCoup" id="Q8EWS6">
    <property type="interactions" value="140"/>
</dbReference>
<dbReference type="STRING" id="272633.gene:10731220"/>
<dbReference type="KEGG" id="mpe:MYPE1260"/>
<dbReference type="eggNOG" id="COG0322">
    <property type="taxonomic scope" value="Bacteria"/>
</dbReference>
<dbReference type="HOGENOM" id="CLU_014841_3_2_14"/>
<dbReference type="InParanoid" id="Q8EWS6"/>
<dbReference type="Proteomes" id="UP000002522">
    <property type="component" value="Chromosome"/>
</dbReference>
<dbReference type="GO" id="GO:0005737">
    <property type="term" value="C:cytoplasm"/>
    <property type="evidence" value="ECO:0007669"/>
    <property type="project" value="UniProtKB-SubCell"/>
</dbReference>
<dbReference type="GO" id="GO:0009380">
    <property type="term" value="C:excinuclease repair complex"/>
    <property type="evidence" value="ECO:0007669"/>
    <property type="project" value="InterPro"/>
</dbReference>
<dbReference type="GO" id="GO:0003677">
    <property type="term" value="F:DNA binding"/>
    <property type="evidence" value="ECO:0007669"/>
    <property type="project" value="UniProtKB-UniRule"/>
</dbReference>
<dbReference type="GO" id="GO:0009381">
    <property type="term" value="F:excinuclease ABC activity"/>
    <property type="evidence" value="ECO:0007669"/>
    <property type="project" value="UniProtKB-UniRule"/>
</dbReference>
<dbReference type="GO" id="GO:0006289">
    <property type="term" value="P:nucleotide-excision repair"/>
    <property type="evidence" value="ECO:0007669"/>
    <property type="project" value="UniProtKB-UniRule"/>
</dbReference>
<dbReference type="GO" id="GO:0009432">
    <property type="term" value="P:SOS response"/>
    <property type="evidence" value="ECO:0007669"/>
    <property type="project" value="UniProtKB-UniRule"/>
</dbReference>
<dbReference type="CDD" id="cd10434">
    <property type="entry name" value="GIY-YIG_UvrC_Cho"/>
    <property type="match status" value="1"/>
</dbReference>
<dbReference type="FunFam" id="3.40.1440.10:FF:000001">
    <property type="entry name" value="UvrABC system protein C"/>
    <property type="match status" value="1"/>
</dbReference>
<dbReference type="Gene3D" id="1.10.150.20">
    <property type="entry name" value="5' to 3' exonuclease, C-terminal subdomain"/>
    <property type="match status" value="1"/>
</dbReference>
<dbReference type="Gene3D" id="3.40.1440.10">
    <property type="entry name" value="GIY-YIG endonuclease"/>
    <property type="match status" value="1"/>
</dbReference>
<dbReference type="Gene3D" id="3.30.420.340">
    <property type="entry name" value="UvrC, RNAse H endonuclease domain"/>
    <property type="match status" value="1"/>
</dbReference>
<dbReference type="HAMAP" id="MF_00203">
    <property type="entry name" value="UvrC"/>
    <property type="match status" value="1"/>
</dbReference>
<dbReference type="InterPro" id="IPR000305">
    <property type="entry name" value="GIY-YIG_endonuc"/>
</dbReference>
<dbReference type="InterPro" id="IPR035901">
    <property type="entry name" value="GIY-YIG_endonuc_sf"/>
</dbReference>
<dbReference type="InterPro" id="IPR047296">
    <property type="entry name" value="GIY-YIG_UvrC_Cho"/>
</dbReference>
<dbReference type="InterPro" id="IPR010994">
    <property type="entry name" value="RuvA_2-like"/>
</dbReference>
<dbReference type="InterPro" id="IPR050066">
    <property type="entry name" value="UvrABC_protein_C"/>
</dbReference>
<dbReference type="InterPro" id="IPR004791">
    <property type="entry name" value="UvrC"/>
</dbReference>
<dbReference type="InterPro" id="IPR001162">
    <property type="entry name" value="UvrC_RNase_H_dom"/>
</dbReference>
<dbReference type="InterPro" id="IPR038476">
    <property type="entry name" value="UvrC_RNase_H_dom_sf"/>
</dbReference>
<dbReference type="NCBIfam" id="TIGR00194">
    <property type="entry name" value="uvrC"/>
    <property type="match status" value="1"/>
</dbReference>
<dbReference type="PANTHER" id="PTHR30562:SF1">
    <property type="entry name" value="UVRABC SYSTEM PROTEIN C"/>
    <property type="match status" value="1"/>
</dbReference>
<dbReference type="PANTHER" id="PTHR30562">
    <property type="entry name" value="UVRC/OXIDOREDUCTASE"/>
    <property type="match status" value="1"/>
</dbReference>
<dbReference type="Pfam" id="PF01541">
    <property type="entry name" value="GIY-YIG"/>
    <property type="match status" value="1"/>
</dbReference>
<dbReference type="Pfam" id="PF22920">
    <property type="entry name" value="UvrC_RNaseH"/>
    <property type="match status" value="1"/>
</dbReference>
<dbReference type="Pfam" id="PF08459">
    <property type="entry name" value="UvrC_RNaseH_dom"/>
    <property type="match status" value="1"/>
</dbReference>
<dbReference type="SMART" id="SM00465">
    <property type="entry name" value="GIYc"/>
    <property type="match status" value="1"/>
</dbReference>
<dbReference type="SUPFAM" id="SSF82771">
    <property type="entry name" value="GIY-YIG endonuclease"/>
    <property type="match status" value="1"/>
</dbReference>
<dbReference type="SUPFAM" id="SSF47781">
    <property type="entry name" value="RuvA domain 2-like"/>
    <property type="match status" value="1"/>
</dbReference>
<dbReference type="PROSITE" id="PS50164">
    <property type="entry name" value="GIY_YIG"/>
    <property type="match status" value="1"/>
</dbReference>
<dbReference type="PROSITE" id="PS50165">
    <property type="entry name" value="UVRC"/>
    <property type="match status" value="1"/>
</dbReference>
<accession>Q8EWS6</accession>
<reference key="1">
    <citation type="journal article" date="2002" name="Nucleic Acids Res.">
        <title>The complete genomic sequence of Mycoplasma penetrans, an intracellular bacterial pathogen in humans.</title>
        <authorList>
            <person name="Sasaki Y."/>
            <person name="Ishikawa J."/>
            <person name="Yamashita A."/>
            <person name="Oshima K."/>
            <person name="Kenri T."/>
            <person name="Furuya K."/>
            <person name="Yoshino C."/>
            <person name="Horino A."/>
            <person name="Shiba T."/>
            <person name="Sasaki T."/>
            <person name="Hattori M."/>
        </authorList>
    </citation>
    <scope>NUCLEOTIDE SEQUENCE [LARGE SCALE GENOMIC DNA]</scope>
    <source>
        <strain>HF-2</strain>
    </source>
</reference>
<protein>
    <recommendedName>
        <fullName evidence="1">UvrABC system protein C</fullName>
        <shortName evidence="1">Protein UvrC</shortName>
    </recommendedName>
    <alternativeName>
        <fullName evidence="1">Excinuclease ABC subunit C</fullName>
    </alternativeName>
</protein>
<organism>
    <name type="scientific">Malacoplasma penetrans (strain HF-2)</name>
    <name type="common">Mycoplasma penetrans</name>
    <dbReference type="NCBI Taxonomy" id="272633"/>
    <lineage>
        <taxon>Bacteria</taxon>
        <taxon>Bacillati</taxon>
        <taxon>Mycoplasmatota</taxon>
        <taxon>Mycoplasmoidales</taxon>
        <taxon>Mycoplasmoidaceae</taxon>
        <taxon>Malacoplasma</taxon>
    </lineage>
</organism>
<comment type="function">
    <text evidence="1">The UvrABC repair system catalyzes the recognition and processing of DNA lesions. UvrC both incises the 5' and 3' sides of the lesion. The N-terminal half is responsible for the 3' incision and the C-terminal half is responsible for the 5' incision.</text>
</comment>
<comment type="subunit">
    <text evidence="1">Interacts with UvrB in an incision complex.</text>
</comment>
<comment type="subcellular location">
    <subcellularLocation>
        <location evidence="1">Cytoplasm</location>
    </subcellularLocation>
</comment>
<comment type="similarity">
    <text evidence="1">Belongs to the UvrC family.</text>
</comment>